<protein>
    <recommendedName>
        <fullName>Vacuolar membrane protein SCRG_03194</fullName>
    </recommendedName>
</protein>
<name>YNF8_YEAS1</name>
<reference key="1">
    <citation type="submission" date="2005-03" db="EMBL/GenBank/DDBJ databases">
        <title>Annotation of the Saccharomyces cerevisiae RM11-1a genome.</title>
        <authorList>
            <consortium name="The Broad Institute Genome Sequencing Platform"/>
            <person name="Birren B.W."/>
            <person name="Lander E.S."/>
            <person name="Galagan J.E."/>
            <person name="Nusbaum C."/>
            <person name="Devon K."/>
            <person name="Cuomo C."/>
            <person name="Jaffe D.B."/>
            <person name="Butler J."/>
            <person name="Alvarez P."/>
            <person name="Gnerre S."/>
            <person name="Grabherr M."/>
            <person name="Kleber M."/>
            <person name="Mauceli E.W."/>
            <person name="Brockman W."/>
            <person name="MacCallum I.A."/>
            <person name="Rounsley S."/>
            <person name="Young S.K."/>
            <person name="LaButti K."/>
            <person name="Pushparaj V."/>
            <person name="DeCaprio D."/>
            <person name="Crawford M."/>
            <person name="Koehrsen M."/>
            <person name="Engels R."/>
            <person name="Montgomery P."/>
            <person name="Pearson M."/>
            <person name="Howarth C."/>
            <person name="Larson L."/>
            <person name="Luoma S."/>
            <person name="White J."/>
            <person name="O'Leary S."/>
            <person name="Kodira C.D."/>
            <person name="Zeng Q."/>
            <person name="Yandava C."/>
            <person name="Alvarado L."/>
            <person name="Pratt S."/>
            <person name="Kruglyak L."/>
        </authorList>
    </citation>
    <scope>NUCLEOTIDE SEQUENCE [LARGE SCALE GENOMIC DNA]</scope>
    <source>
        <strain>RM11-1a</strain>
    </source>
</reference>
<dbReference type="EMBL" id="CH408049">
    <property type="protein sequence ID" value="EDV12313.1"/>
    <property type="molecule type" value="Genomic_DNA"/>
</dbReference>
<dbReference type="HOGENOM" id="CLU_061224_0_0_1"/>
<dbReference type="OrthoDB" id="38581at4893"/>
<dbReference type="Proteomes" id="UP000008335">
    <property type="component" value="Unassembled WGS sequence"/>
</dbReference>
<dbReference type="GO" id="GO:0005935">
    <property type="term" value="C:cellular bud neck"/>
    <property type="evidence" value="ECO:0007669"/>
    <property type="project" value="TreeGrafter"/>
</dbReference>
<dbReference type="GO" id="GO:0000324">
    <property type="term" value="C:fungal-type vacuole"/>
    <property type="evidence" value="ECO:0007669"/>
    <property type="project" value="TreeGrafter"/>
</dbReference>
<dbReference type="GO" id="GO:0005774">
    <property type="term" value="C:vacuolar membrane"/>
    <property type="evidence" value="ECO:0007669"/>
    <property type="project" value="UniProtKB-SubCell"/>
</dbReference>
<dbReference type="InterPro" id="IPR051009">
    <property type="entry name" value="PRM"/>
</dbReference>
<dbReference type="PANTHER" id="PTHR36089">
    <property type="entry name" value="CHITIN SYNTHASE 3 COMPLEX PROTEIN CSI2-RELATED"/>
    <property type="match status" value="1"/>
</dbReference>
<dbReference type="PANTHER" id="PTHR36089:SF1">
    <property type="entry name" value="CHITIN SYNTHASE 3 COMPLEX PROTEIN CSI2-RELATED"/>
    <property type="match status" value="1"/>
</dbReference>
<proteinExistence type="inferred from homology"/>
<organism>
    <name type="scientific">Saccharomyces cerevisiae (strain RM11-1a)</name>
    <name type="common">Baker's yeast</name>
    <dbReference type="NCBI Taxonomy" id="285006"/>
    <lineage>
        <taxon>Eukaryota</taxon>
        <taxon>Fungi</taxon>
        <taxon>Dikarya</taxon>
        <taxon>Ascomycota</taxon>
        <taxon>Saccharomycotina</taxon>
        <taxon>Saccharomycetes</taxon>
        <taxon>Saccharomycetales</taxon>
        <taxon>Saccharomycetaceae</taxon>
        <taxon>Saccharomyces</taxon>
    </lineage>
</organism>
<accession>B3LNR8</accession>
<feature type="chain" id="PRO_0000409320" description="Vacuolar membrane protein SCRG_03194">
    <location>
        <begin position="1"/>
        <end position="314"/>
    </location>
</feature>
<feature type="transmembrane region" description="Helical" evidence="3">
    <location>
        <begin position="93"/>
        <end position="113"/>
    </location>
</feature>
<feature type="region of interest" description="Disordered" evidence="4">
    <location>
        <begin position="32"/>
        <end position="60"/>
    </location>
</feature>
<feature type="region of interest" description="Disordered" evidence="4">
    <location>
        <begin position="240"/>
        <end position="309"/>
    </location>
</feature>
<feature type="compositionally biased region" description="Basic and acidic residues" evidence="4">
    <location>
        <begin position="254"/>
        <end position="269"/>
    </location>
</feature>
<feature type="modified residue" description="Phosphoserine" evidence="2">
    <location>
        <position position="148"/>
    </location>
</feature>
<feature type="modified residue" description="Phosphoserine" evidence="2">
    <location>
        <position position="254"/>
    </location>
</feature>
<feature type="modified residue" description="Phosphoserine" evidence="2">
    <location>
        <position position="274"/>
    </location>
</feature>
<gene>
    <name type="ORF">SCRG_03194</name>
</gene>
<sequence length="314" mass="34728">MVKKNFIPSVSLVRRDLPTLVTTTTSSTALSKPTSSVVSETSSKSLPSLTSSAFSTSSGATSSSSLIVASITPPSTAGNPFILNAADKPNGTVYIAVGAVIGAIFISILIWWLVSSYLSRRFTMTNSYANDSKNLYRGHHKHSSSLQSNPFDINDEKSYMQDDWDSMSQLESSQYEDAASPFNPIQDPFTDNRRSLFISPTLQVSQYEKSHSRHQSKDTNIFIDDPSLYVGTYLEEEEEEERKLNLNRPQRAASPERKEKKINSMEGYHKRNQSSLGLIPVASATSNTSSPKKAHKRQAPSMFLDDVLNGREII</sequence>
<keyword id="KW-0472">Membrane</keyword>
<keyword id="KW-0597">Phosphoprotein</keyword>
<keyword id="KW-0812">Transmembrane</keyword>
<keyword id="KW-1133">Transmembrane helix</keyword>
<keyword id="KW-0926">Vacuole</keyword>
<comment type="subcellular location">
    <subcellularLocation>
        <location evidence="1">Vacuole membrane</location>
        <topology evidence="1">Single-pass membrane protein</topology>
    </subcellularLocation>
</comment>
<comment type="similarity">
    <text evidence="5">Belongs to the PRM5 family.</text>
</comment>
<evidence type="ECO:0000250" key="1"/>
<evidence type="ECO:0000250" key="2">
    <source>
        <dbReference type="UniProtKB" id="P53947"/>
    </source>
</evidence>
<evidence type="ECO:0000255" key="3"/>
<evidence type="ECO:0000256" key="4">
    <source>
        <dbReference type="SAM" id="MobiDB-lite"/>
    </source>
</evidence>
<evidence type="ECO:0000305" key="5"/>